<accession>Q9L1I2</accession>
<keyword id="KW-0270">Exopolysaccharide synthesis</keyword>
<keyword id="KW-1185">Reference proteome</keyword>
<keyword id="KW-0808">Transferase</keyword>
<reference key="1">
    <citation type="journal article" date="2002" name="Nature">
        <title>Complete genome sequence of the model actinomycete Streptomyces coelicolor A3(2).</title>
        <authorList>
            <person name="Bentley S.D."/>
            <person name="Chater K.F."/>
            <person name="Cerdeno-Tarraga A.-M."/>
            <person name="Challis G.L."/>
            <person name="Thomson N.R."/>
            <person name="James K.D."/>
            <person name="Harris D.E."/>
            <person name="Quail M.A."/>
            <person name="Kieser H."/>
            <person name="Harper D."/>
            <person name="Bateman A."/>
            <person name="Brown S."/>
            <person name="Chandra G."/>
            <person name="Chen C.W."/>
            <person name="Collins M."/>
            <person name="Cronin A."/>
            <person name="Fraser A."/>
            <person name="Goble A."/>
            <person name="Hidalgo J."/>
            <person name="Hornsby T."/>
            <person name="Howarth S."/>
            <person name="Huang C.-H."/>
            <person name="Kieser T."/>
            <person name="Larke L."/>
            <person name="Murphy L.D."/>
            <person name="Oliver K."/>
            <person name="O'Neil S."/>
            <person name="Rabbinowitsch E."/>
            <person name="Rajandream M.A."/>
            <person name="Rutherford K.M."/>
            <person name="Rutter S."/>
            <person name="Seeger K."/>
            <person name="Saunders D."/>
            <person name="Sharp S."/>
            <person name="Squares R."/>
            <person name="Squares S."/>
            <person name="Taylor K."/>
            <person name="Warren T."/>
            <person name="Wietzorrek A."/>
            <person name="Woodward J.R."/>
            <person name="Barrell B.G."/>
            <person name="Parkhill J."/>
            <person name="Hopwood D.A."/>
        </authorList>
    </citation>
    <scope>NUCLEOTIDE SEQUENCE [LARGE SCALE GENOMIC DNA]</scope>
    <source>
        <strain>ATCC BAA-471 / A3(2) / M145</strain>
    </source>
</reference>
<reference key="2">
    <citation type="journal article" date="2005" name="PLoS Comput. Biol.">
        <title>Stealth proteins: in silico identification of a novel protein family rendering bacterial pathogens invisible to host immune defense.</title>
        <authorList>
            <person name="Sperisen P."/>
            <person name="Schmid C.D."/>
            <person name="Bucher P."/>
            <person name="Zilian O."/>
        </authorList>
    </citation>
    <scope>IDENTIFICATION AS A STEALTH PROTEIN</scope>
    <scope>PREDICTION OF FUNCTION</scope>
</reference>
<proteinExistence type="inferred from homology"/>
<feature type="chain" id="PRO_0000235960" description="Exopolysaccharide phosphotransferase SCO2594">
    <location>
        <begin position="1"/>
        <end position="602"/>
    </location>
</feature>
<feature type="region of interest" description="Disordered" evidence="1">
    <location>
        <begin position="251"/>
        <end position="271"/>
    </location>
</feature>
<organism>
    <name type="scientific">Streptomyces coelicolor (strain ATCC BAA-471 / A3(2) / M145)</name>
    <dbReference type="NCBI Taxonomy" id="100226"/>
    <lineage>
        <taxon>Bacteria</taxon>
        <taxon>Bacillati</taxon>
        <taxon>Actinomycetota</taxon>
        <taxon>Actinomycetes</taxon>
        <taxon>Kitasatosporales</taxon>
        <taxon>Streptomycetaceae</taxon>
        <taxon>Streptomyces</taxon>
        <taxon>Streptomyces albidoflavus group</taxon>
    </lineage>
</organism>
<comment type="miscellaneous">
    <text>Stealth proteins are part of a protein family that is conserved from bacteria to higher eukaryotes. Family members were first identified in microbes as proteins that help pathogens to elude the host innate immune system. Microbial stealth proteins are involved in the biosynthesis of exopolysaccharides. Stealth proteins are predicted to function as hexose-1-phosphoryltransferases.</text>
</comment>
<comment type="similarity">
    <text evidence="2">Belongs to the stealth family.</text>
</comment>
<dbReference type="EC" id="2.7.-.-"/>
<dbReference type="EMBL" id="AL939113">
    <property type="protein sequence ID" value="CAB75375.1"/>
    <property type="molecule type" value="Genomic_DNA"/>
</dbReference>
<dbReference type="RefSeq" id="NP_626831.1">
    <property type="nucleotide sequence ID" value="NC_003888.3"/>
</dbReference>
<dbReference type="RefSeq" id="WP_003976207.1">
    <property type="nucleotide sequence ID" value="NZ_VNID01000001.1"/>
</dbReference>
<dbReference type="SMR" id="Q9L1I2"/>
<dbReference type="STRING" id="100226.gene:17760198"/>
<dbReference type="PaxDb" id="100226-SCO2594"/>
<dbReference type="KEGG" id="sco:SCO2594"/>
<dbReference type="PATRIC" id="fig|100226.15.peg.2640"/>
<dbReference type="eggNOG" id="COG0438">
    <property type="taxonomic scope" value="Bacteria"/>
</dbReference>
<dbReference type="HOGENOM" id="CLU_033996_0_0_11"/>
<dbReference type="InParanoid" id="Q9L1I2"/>
<dbReference type="OrthoDB" id="9776077at2"/>
<dbReference type="PhylomeDB" id="Q9L1I2"/>
<dbReference type="Proteomes" id="UP000001973">
    <property type="component" value="Chromosome"/>
</dbReference>
<dbReference type="GO" id="GO:0016772">
    <property type="term" value="F:transferase activity, transferring phosphorus-containing groups"/>
    <property type="evidence" value="ECO:0007669"/>
    <property type="project" value="InterPro"/>
</dbReference>
<dbReference type="GO" id="GO:0000271">
    <property type="term" value="P:polysaccharide biosynthetic process"/>
    <property type="evidence" value="ECO:0007669"/>
    <property type="project" value="UniProtKB-KW"/>
</dbReference>
<dbReference type="InterPro" id="IPR047141">
    <property type="entry name" value="Stealth"/>
</dbReference>
<dbReference type="InterPro" id="IPR031358">
    <property type="entry name" value="Stealth_CR1"/>
</dbReference>
<dbReference type="InterPro" id="IPR021520">
    <property type="entry name" value="Stealth_CR2"/>
</dbReference>
<dbReference type="InterPro" id="IPR031357">
    <property type="entry name" value="Stealth_CR3"/>
</dbReference>
<dbReference type="InterPro" id="IPR031356">
    <property type="entry name" value="Stealth_CR4"/>
</dbReference>
<dbReference type="PANTHER" id="PTHR24045">
    <property type="match status" value="1"/>
</dbReference>
<dbReference type="PANTHER" id="PTHR24045:SF0">
    <property type="entry name" value="N-ACETYLGLUCOSAMINE-1-PHOSPHOTRANSFERASE SUBUNITS ALPHA_BETA"/>
    <property type="match status" value="1"/>
</dbReference>
<dbReference type="Pfam" id="PF17101">
    <property type="entry name" value="Stealth_CR1"/>
    <property type="match status" value="1"/>
</dbReference>
<dbReference type="Pfam" id="PF11380">
    <property type="entry name" value="Stealth_CR2"/>
    <property type="match status" value="1"/>
</dbReference>
<dbReference type="Pfam" id="PF17102">
    <property type="entry name" value="Stealth_CR3"/>
    <property type="match status" value="1"/>
</dbReference>
<dbReference type="Pfam" id="PF17103">
    <property type="entry name" value="Stealth_CR4"/>
    <property type="match status" value="1"/>
</dbReference>
<sequence>MRNPEAPRLVGVYRRVVPVGARRVIAEHVDSGFRQQVKEGIAAAAAKRDQINRVRVARSHRKLLARHDRRVVSVGKAPRIAHVVPRATPLDARRANLDDVTEALRHAGIDYFCVRSASETSTAVAVREDDREHVITALRQACRVRPGYVIPVGKGEPLDEAALPAFGTGPWKRVSGSPVFRCTWYRTDETGRMVFGLRYGCDIEFWHQEGGELVSPRRNPVAEAVPVEEEATEADESLFTDLAPLPEDRIPRAGEDLDAGDGAAGGPRPGLVRTRPAFAAGSVGRRTFPIDVVYTWVDGSDPAWIRSRAEFSDRPYHEEAANAARYLSRDELRYSLRSLNLYAPWVRNIYLVTADQTPDWLNTDHPRLKVVSHKEIFSEPTSLPTFNSHAIESQLHHIDGLSEHFLYFNDDVMLGRETLPQHFFLPNGLGQYYLSPALIPFGEPNSEDPPVAAAGKNNRRLIAERFGGSTIFRKMKHVPHALHRGVLEAIETDFADEHRRTAASRFRSAGDISVTSSLHHYYAFHTGRSFPGDQLVYRYLDVGKPGAERVLGRLLAEREAHVFCLNDTTSTESELAHQQALMTRFLDEYFPFPSPYERGADD</sequence>
<gene>
    <name type="ordered locus">SCO2594</name>
    <name type="ORF">SCC88.05c</name>
</gene>
<name>Y2594_STRCO</name>
<protein>
    <recommendedName>
        <fullName>Exopolysaccharide phosphotransferase SCO2594</fullName>
        <ecNumber>2.7.-.-</ecNumber>
    </recommendedName>
    <alternativeName>
        <fullName>Stealth protein SCO2594</fullName>
    </alternativeName>
</protein>
<evidence type="ECO:0000256" key="1">
    <source>
        <dbReference type="SAM" id="MobiDB-lite"/>
    </source>
</evidence>
<evidence type="ECO:0000305" key="2"/>